<dbReference type="EMBL" id="CR382124">
    <property type="protein sequence ID" value="CAH00666.1"/>
    <property type="molecule type" value="Genomic_DNA"/>
</dbReference>
<dbReference type="RefSeq" id="XP_453570.1">
    <property type="nucleotide sequence ID" value="XM_453570.1"/>
</dbReference>
<dbReference type="SMR" id="Q6CR69"/>
<dbReference type="FunCoup" id="Q6CR69">
    <property type="interactions" value="119"/>
</dbReference>
<dbReference type="STRING" id="284590.Q6CR69"/>
<dbReference type="PaxDb" id="284590-Q6CR69"/>
<dbReference type="KEGG" id="kla:KLLA0_D11418g"/>
<dbReference type="eggNOG" id="ENOG502S02Z">
    <property type="taxonomic scope" value="Eukaryota"/>
</dbReference>
<dbReference type="HOGENOM" id="CLU_407123_0_0_1"/>
<dbReference type="InParanoid" id="Q6CR69"/>
<dbReference type="OMA" id="NTSMIPH"/>
<dbReference type="Proteomes" id="UP000000598">
    <property type="component" value="Chromosome D"/>
</dbReference>
<dbReference type="GO" id="GO:0005694">
    <property type="term" value="C:chromosome"/>
    <property type="evidence" value="ECO:0007669"/>
    <property type="project" value="UniProtKB-SubCell"/>
</dbReference>
<dbReference type="GO" id="GO:0005634">
    <property type="term" value="C:nucleus"/>
    <property type="evidence" value="ECO:0007669"/>
    <property type="project" value="UniProtKB-SubCell"/>
</dbReference>
<dbReference type="GO" id="GO:0003677">
    <property type="term" value="F:DNA binding"/>
    <property type="evidence" value="ECO:0007669"/>
    <property type="project" value="UniProtKB-KW"/>
</dbReference>
<dbReference type="GO" id="GO:0000166">
    <property type="term" value="F:nucleotide binding"/>
    <property type="evidence" value="ECO:0007669"/>
    <property type="project" value="UniProtKB-KW"/>
</dbReference>
<dbReference type="GO" id="GO:0007059">
    <property type="term" value="P:chromosome segregation"/>
    <property type="evidence" value="ECO:0007669"/>
    <property type="project" value="UniProtKB-KW"/>
</dbReference>
<dbReference type="GO" id="GO:0051321">
    <property type="term" value="P:meiotic cell cycle"/>
    <property type="evidence" value="ECO:0007669"/>
    <property type="project" value="UniProtKB-KW"/>
</dbReference>
<comment type="function">
    <text evidence="1">Required for initiation of meiotic chromosome synapsis. Involved in synaptonemal complex formation, a structure that tethers a pair of homologous chromosomes along their lengths and plays a central role in recombination and homolog segregation during meiosis (By similarity).</text>
</comment>
<comment type="subcellular location">
    <subcellularLocation>
        <location evidence="1">Nucleus</location>
    </subcellularLocation>
    <subcellularLocation>
        <location evidence="1">Chromosome</location>
    </subcellularLocation>
    <text evidence="1">localizes to a meiosis specific chromosomal structure called the synaptonemal complex (SC) formed during meiotic prophase.</text>
</comment>
<comment type="similarity">
    <text evidence="2">Belongs to the ZIP2 family.</text>
</comment>
<gene>
    <name type="primary">ZIP2</name>
    <name type="ordered locus">KLLA0D11418g</name>
</gene>
<feature type="chain" id="PRO_0000333499" description="Protein ZIP2">
    <location>
        <begin position="1"/>
        <end position="675"/>
    </location>
</feature>
<reference key="1">
    <citation type="journal article" date="2004" name="Nature">
        <title>Genome evolution in yeasts.</title>
        <authorList>
            <person name="Dujon B."/>
            <person name="Sherman D."/>
            <person name="Fischer G."/>
            <person name="Durrens P."/>
            <person name="Casaregola S."/>
            <person name="Lafontaine I."/>
            <person name="de Montigny J."/>
            <person name="Marck C."/>
            <person name="Neuveglise C."/>
            <person name="Talla E."/>
            <person name="Goffard N."/>
            <person name="Frangeul L."/>
            <person name="Aigle M."/>
            <person name="Anthouard V."/>
            <person name="Babour A."/>
            <person name="Barbe V."/>
            <person name="Barnay S."/>
            <person name="Blanchin S."/>
            <person name="Beckerich J.-M."/>
            <person name="Beyne E."/>
            <person name="Bleykasten C."/>
            <person name="Boisrame A."/>
            <person name="Boyer J."/>
            <person name="Cattolico L."/>
            <person name="Confanioleri F."/>
            <person name="de Daruvar A."/>
            <person name="Despons L."/>
            <person name="Fabre E."/>
            <person name="Fairhead C."/>
            <person name="Ferry-Dumazet H."/>
            <person name="Groppi A."/>
            <person name="Hantraye F."/>
            <person name="Hennequin C."/>
            <person name="Jauniaux N."/>
            <person name="Joyet P."/>
            <person name="Kachouri R."/>
            <person name="Kerrest A."/>
            <person name="Koszul R."/>
            <person name="Lemaire M."/>
            <person name="Lesur I."/>
            <person name="Ma L."/>
            <person name="Muller H."/>
            <person name="Nicaud J.-M."/>
            <person name="Nikolski M."/>
            <person name="Oztas S."/>
            <person name="Ozier-Kalogeropoulos O."/>
            <person name="Pellenz S."/>
            <person name="Potier S."/>
            <person name="Richard G.-F."/>
            <person name="Straub M.-L."/>
            <person name="Suleau A."/>
            <person name="Swennen D."/>
            <person name="Tekaia F."/>
            <person name="Wesolowski-Louvel M."/>
            <person name="Westhof E."/>
            <person name="Wirth B."/>
            <person name="Zeniou-Meyer M."/>
            <person name="Zivanovic Y."/>
            <person name="Bolotin-Fukuhara M."/>
            <person name="Thierry A."/>
            <person name="Bouchier C."/>
            <person name="Caudron B."/>
            <person name="Scarpelli C."/>
            <person name="Gaillardin C."/>
            <person name="Weissenbach J."/>
            <person name="Wincker P."/>
            <person name="Souciet J.-L."/>
        </authorList>
    </citation>
    <scope>NUCLEOTIDE SEQUENCE [LARGE SCALE GENOMIC DNA]</scope>
    <source>
        <strain>ATCC 8585 / CBS 2359 / DSM 70799 / NBRC 1267 / NRRL Y-1140 / WM37</strain>
    </source>
</reference>
<protein>
    <recommendedName>
        <fullName>Protein ZIP2</fullName>
    </recommendedName>
    <alternativeName>
        <fullName>Zipping up meiotic chromosomes protein 2</fullName>
    </alternativeName>
</protein>
<name>ZIP2_KLULA</name>
<accession>Q6CR69</accession>
<sequence>MVSAMWDTSALKLRNIFEEEFGGYLEKRLRESIQLNRPTKRYLKLATRSDIDLKFHKVGKKESNGSSLVKYIIEFDTTAILVKGYIRPWNNPEWKCKAPYNSNQNVDTRSLYKEKIIVRDNVKDLFSAALTKLDLSVRLNKFDQNVHAKYRLNEDFLQPLGRTLRHSCEFPVMHSRLVQRESELYEEFLSYDLPKRQMTTMDIQFKTVKVQSFQQYKIQYIQTLTREKTSQEYTSSARLPHWQSNQIQNSSIKFLKLCCEDEDFHPLELYKLENPKADQFQRKAVYRSKPIKPKWRISDEIIKRLNWNPFKELNLPKNSELLESLRDVQVRCTSYALVFKRIPSSKIDLMVSKIPVSFRSVNAISYDQFDPKSKENVQESSQCIDSLANEETTDVDEVTNKRIMTSGKRSFINADLVSIIAAKRSKLKRLSISNGDVNPVATLNETVEQSTMSNVTFQLSDKSFHNAEEKVIIFNAEYIAKNYKLINFLHQNNFCVLEMDLGDHSDILLDASTCLILRNITSVYQKQVDSFPLLRAIQELKCKYKRVVIFLSYSERSLALDSNLAYKTQLLLNCLGGTTTHLVEETQLKLTATWISLYCGTNTPNEQQIYRMSLSKEVLQHFDINPIAIESILSLTSLEEFLSISYGKRALLYGKFLTEYQLAHIDDFVTMSWSE</sequence>
<organism>
    <name type="scientific">Kluyveromyces lactis (strain ATCC 8585 / CBS 2359 / DSM 70799 / NBRC 1267 / NRRL Y-1140 / WM37)</name>
    <name type="common">Yeast</name>
    <name type="synonym">Candida sphaerica</name>
    <dbReference type="NCBI Taxonomy" id="284590"/>
    <lineage>
        <taxon>Eukaryota</taxon>
        <taxon>Fungi</taxon>
        <taxon>Dikarya</taxon>
        <taxon>Ascomycota</taxon>
        <taxon>Saccharomycotina</taxon>
        <taxon>Saccharomycetes</taxon>
        <taxon>Saccharomycetales</taxon>
        <taxon>Saccharomycetaceae</taxon>
        <taxon>Kluyveromyces</taxon>
    </lineage>
</organism>
<proteinExistence type="inferred from homology"/>
<evidence type="ECO:0000250" key="1"/>
<evidence type="ECO:0000305" key="2"/>
<keyword id="KW-0131">Cell cycle</keyword>
<keyword id="KW-0160">Chromosomal rearrangement</keyword>
<keyword id="KW-0158">Chromosome</keyword>
<keyword id="KW-0159">Chromosome partition</keyword>
<keyword id="KW-0238">DNA-binding</keyword>
<keyword id="KW-0469">Meiosis</keyword>
<keyword id="KW-0547">Nucleotide-binding</keyword>
<keyword id="KW-0539">Nucleus</keyword>
<keyword id="KW-1185">Reference proteome</keyword>